<feature type="chain" id="PRO_1000091763" description="Elongation factor G">
    <location>
        <begin position="1"/>
        <end position="692"/>
    </location>
</feature>
<feature type="domain" description="tr-type G">
    <location>
        <begin position="8"/>
        <end position="282"/>
    </location>
</feature>
<feature type="binding site" evidence="1">
    <location>
        <begin position="17"/>
        <end position="24"/>
    </location>
    <ligand>
        <name>GTP</name>
        <dbReference type="ChEBI" id="CHEBI:37565"/>
    </ligand>
</feature>
<feature type="binding site" evidence="1">
    <location>
        <begin position="81"/>
        <end position="85"/>
    </location>
    <ligand>
        <name>GTP</name>
        <dbReference type="ChEBI" id="CHEBI:37565"/>
    </ligand>
</feature>
<feature type="binding site" evidence="1">
    <location>
        <begin position="135"/>
        <end position="138"/>
    </location>
    <ligand>
        <name>GTP</name>
        <dbReference type="ChEBI" id="CHEBI:37565"/>
    </ligand>
</feature>
<comment type="function">
    <text evidence="1">Catalyzes the GTP-dependent ribosomal translocation step during translation elongation. During this step, the ribosome changes from the pre-translocational (PRE) to the post-translocational (POST) state as the newly formed A-site-bound peptidyl-tRNA and P-site-bound deacylated tRNA move to the P and E sites, respectively. Catalyzes the coordinated movement of the two tRNA molecules, the mRNA and conformational changes in the ribosome.</text>
</comment>
<comment type="subcellular location">
    <subcellularLocation>
        <location evidence="1">Cytoplasm</location>
    </subcellularLocation>
</comment>
<comment type="similarity">
    <text evidence="1">Belongs to the TRAFAC class translation factor GTPase superfamily. Classic translation factor GTPase family. EF-G/EF-2 subfamily.</text>
</comment>
<reference key="1">
    <citation type="journal article" date="2008" name="PLoS ONE">
        <title>Genome sequence of a lancefield group C Streptococcus zooepidemicus strain causing epidemic nephritis: new information about an old disease.</title>
        <authorList>
            <person name="Beres S.B."/>
            <person name="Sesso R."/>
            <person name="Pinto S.W.L."/>
            <person name="Hoe N.P."/>
            <person name="Porcella S.F."/>
            <person name="Deleo F.R."/>
            <person name="Musser J.M."/>
        </authorList>
    </citation>
    <scope>NUCLEOTIDE SEQUENCE [LARGE SCALE GENOMIC DNA]</scope>
    <source>
        <strain>MGCS10565</strain>
    </source>
</reference>
<accession>B4U0V9</accession>
<name>EFG_STREM</name>
<protein>
    <recommendedName>
        <fullName evidence="1">Elongation factor G</fullName>
        <shortName evidence="1">EF-G</shortName>
    </recommendedName>
</protein>
<proteinExistence type="inferred from homology"/>
<dbReference type="EMBL" id="CP001129">
    <property type="protein sequence ID" value="ACG61646.1"/>
    <property type="molecule type" value="Genomic_DNA"/>
</dbReference>
<dbReference type="RefSeq" id="WP_012514927.1">
    <property type="nucleotide sequence ID" value="NC_011134.1"/>
</dbReference>
<dbReference type="SMR" id="B4U0V9"/>
<dbReference type="KEGG" id="sez:Sez_0268"/>
<dbReference type="HOGENOM" id="CLU_002794_4_1_9"/>
<dbReference type="Proteomes" id="UP000001873">
    <property type="component" value="Chromosome"/>
</dbReference>
<dbReference type="GO" id="GO:0005737">
    <property type="term" value="C:cytoplasm"/>
    <property type="evidence" value="ECO:0007669"/>
    <property type="project" value="UniProtKB-SubCell"/>
</dbReference>
<dbReference type="GO" id="GO:0005525">
    <property type="term" value="F:GTP binding"/>
    <property type="evidence" value="ECO:0007669"/>
    <property type="project" value="UniProtKB-UniRule"/>
</dbReference>
<dbReference type="GO" id="GO:0003924">
    <property type="term" value="F:GTPase activity"/>
    <property type="evidence" value="ECO:0007669"/>
    <property type="project" value="InterPro"/>
</dbReference>
<dbReference type="GO" id="GO:0003746">
    <property type="term" value="F:translation elongation factor activity"/>
    <property type="evidence" value="ECO:0007669"/>
    <property type="project" value="UniProtKB-UniRule"/>
</dbReference>
<dbReference type="GO" id="GO:0032790">
    <property type="term" value="P:ribosome disassembly"/>
    <property type="evidence" value="ECO:0007669"/>
    <property type="project" value="TreeGrafter"/>
</dbReference>
<dbReference type="CDD" id="cd01886">
    <property type="entry name" value="EF-G"/>
    <property type="match status" value="1"/>
</dbReference>
<dbReference type="CDD" id="cd16262">
    <property type="entry name" value="EFG_III"/>
    <property type="match status" value="1"/>
</dbReference>
<dbReference type="CDD" id="cd01434">
    <property type="entry name" value="EFG_mtEFG1_IV"/>
    <property type="match status" value="1"/>
</dbReference>
<dbReference type="CDD" id="cd03713">
    <property type="entry name" value="EFG_mtEFG_C"/>
    <property type="match status" value="1"/>
</dbReference>
<dbReference type="CDD" id="cd04088">
    <property type="entry name" value="EFG_mtEFG_II"/>
    <property type="match status" value="1"/>
</dbReference>
<dbReference type="FunFam" id="2.40.30.10:FF:000006">
    <property type="entry name" value="Elongation factor G"/>
    <property type="match status" value="1"/>
</dbReference>
<dbReference type="FunFam" id="3.30.230.10:FF:000003">
    <property type="entry name" value="Elongation factor G"/>
    <property type="match status" value="1"/>
</dbReference>
<dbReference type="FunFam" id="3.30.70.240:FF:000001">
    <property type="entry name" value="Elongation factor G"/>
    <property type="match status" value="1"/>
</dbReference>
<dbReference type="FunFam" id="3.30.70.870:FF:000001">
    <property type="entry name" value="Elongation factor G"/>
    <property type="match status" value="1"/>
</dbReference>
<dbReference type="FunFam" id="3.40.50.300:FF:000029">
    <property type="entry name" value="Elongation factor G"/>
    <property type="match status" value="1"/>
</dbReference>
<dbReference type="Gene3D" id="3.30.230.10">
    <property type="match status" value="1"/>
</dbReference>
<dbReference type="Gene3D" id="3.30.70.240">
    <property type="match status" value="1"/>
</dbReference>
<dbReference type="Gene3D" id="3.30.70.870">
    <property type="entry name" value="Elongation Factor G (Translational Gtpase), domain 3"/>
    <property type="match status" value="1"/>
</dbReference>
<dbReference type="Gene3D" id="3.40.50.300">
    <property type="entry name" value="P-loop containing nucleotide triphosphate hydrolases"/>
    <property type="match status" value="1"/>
</dbReference>
<dbReference type="Gene3D" id="2.40.30.10">
    <property type="entry name" value="Translation factors"/>
    <property type="match status" value="1"/>
</dbReference>
<dbReference type="HAMAP" id="MF_00054_B">
    <property type="entry name" value="EF_G_EF_2_B"/>
    <property type="match status" value="1"/>
</dbReference>
<dbReference type="InterPro" id="IPR041095">
    <property type="entry name" value="EFG_II"/>
</dbReference>
<dbReference type="InterPro" id="IPR009022">
    <property type="entry name" value="EFG_III"/>
</dbReference>
<dbReference type="InterPro" id="IPR035647">
    <property type="entry name" value="EFG_III/V"/>
</dbReference>
<dbReference type="InterPro" id="IPR047872">
    <property type="entry name" value="EFG_IV"/>
</dbReference>
<dbReference type="InterPro" id="IPR035649">
    <property type="entry name" value="EFG_V"/>
</dbReference>
<dbReference type="InterPro" id="IPR000640">
    <property type="entry name" value="EFG_V-like"/>
</dbReference>
<dbReference type="InterPro" id="IPR004161">
    <property type="entry name" value="EFTu-like_2"/>
</dbReference>
<dbReference type="InterPro" id="IPR031157">
    <property type="entry name" value="G_TR_CS"/>
</dbReference>
<dbReference type="InterPro" id="IPR027417">
    <property type="entry name" value="P-loop_NTPase"/>
</dbReference>
<dbReference type="InterPro" id="IPR020568">
    <property type="entry name" value="Ribosomal_Su5_D2-typ_SF"/>
</dbReference>
<dbReference type="InterPro" id="IPR014721">
    <property type="entry name" value="Ribsml_uS5_D2-typ_fold_subgr"/>
</dbReference>
<dbReference type="InterPro" id="IPR005225">
    <property type="entry name" value="Small_GTP-bd"/>
</dbReference>
<dbReference type="InterPro" id="IPR000795">
    <property type="entry name" value="T_Tr_GTP-bd_dom"/>
</dbReference>
<dbReference type="InterPro" id="IPR009000">
    <property type="entry name" value="Transl_B-barrel_sf"/>
</dbReference>
<dbReference type="InterPro" id="IPR004540">
    <property type="entry name" value="Transl_elong_EFG/EF2"/>
</dbReference>
<dbReference type="InterPro" id="IPR005517">
    <property type="entry name" value="Transl_elong_EFG/EF2_IV"/>
</dbReference>
<dbReference type="NCBIfam" id="TIGR00484">
    <property type="entry name" value="EF-G"/>
    <property type="match status" value="1"/>
</dbReference>
<dbReference type="NCBIfam" id="NF009379">
    <property type="entry name" value="PRK12740.1-3"/>
    <property type="match status" value="1"/>
</dbReference>
<dbReference type="NCBIfam" id="NF009381">
    <property type="entry name" value="PRK12740.1-5"/>
    <property type="match status" value="1"/>
</dbReference>
<dbReference type="NCBIfam" id="TIGR00231">
    <property type="entry name" value="small_GTP"/>
    <property type="match status" value="1"/>
</dbReference>
<dbReference type="PANTHER" id="PTHR43261:SF1">
    <property type="entry name" value="RIBOSOME-RELEASING FACTOR 2, MITOCHONDRIAL"/>
    <property type="match status" value="1"/>
</dbReference>
<dbReference type="PANTHER" id="PTHR43261">
    <property type="entry name" value="TRANSLATION ELONGATION FACTOR G-RELATED"/>
    <property type="match status" value="1"/>
</dbReference>
<dbReference type="Pfam" id="PF00679">
    <property type="entry name" value="EFG_C"/>
    <property type="match status" value="1"/>
</dbReference>
<dbReference type="Pfam" id="PF14492">
    <property type="entry name" value="EFG_III"/>
    <property type="match status" value="1"/>
</dbReference>
<dbReference type="Pfam" id="PF03764">
    <property type="entry name" value="EFG_IV"/>
    <property type="match status" value="1"/>
</dbReference>
<dbReference type="Pfam" id="PF00009">
    <property type="entry name" value="GTP_EFTU"/>
    <property type="match status" value="1"/>
</dbReference>
<dbReference type="Pfam" id="PF03144">
    <property type="entry name" value="GTP_EFTU_D2"/>
    <property type="match status" value="1"/>
</dbReference>
<dbReference type="PRINTS" id="PR00315">
    <property type="entry name" value="ELONGATNFCT"/>
</dbReference>
<dbReference type="SMART" id="SM00838">
    <property type="entry name" value="EFG_C"/>
    <property type="match status" value="1"/>
</dbReference>
<dbReference type="SMART" id="SM00889">
    <property type="entry name" value="EFG_IV"/>
    <property type="match status" value="1"/>
</dbReference>
<dbReference type="SUPFAM" id="SSF54980">
    <property type="entry name" value="EF-G C-terminal domain-like"/>
    <property type="match status" value="2"/>
</dbReference>
<dbReference type="SUPFAM" id="SSF52540">
    <property type="entry name" value="P-loop containing nucleoside triphosphate hydrolases"/>
    <property type="match status" value="1"/>
</dbReference>
<dbReference type="SUPFAM" id="SSF54211">
    <property type="entry name" value="Ribosomal protein S5 domain 2-like"/>
    <property type="match status" value="1"/>
</dbReference>
<dbReference type="SUPFAM" id="SSF50447">
    <property type="entry name" value="Translation proteins"/>
    <property type="match status" value="1"/>
</dbReference>
<dbReference type="PROSITE" id="PS00301">
    <property type="entry name" value="G_TR_1"/>
    <property type="match status" value="1"/>
</dbReference>
<dbReference type="PROSITE" id="PS51722">
    <property type="entry name" value="G_TR_2"/>
    <property type="match status" value="1"/>
</dbReference>
<organism>
    <name type="scientific">Streptococcus equi subsp. zooepidemicus (strain MGCS10565)</name>
    <dbReference type="NCBI Taxonomy" id="552526"/>
    <lineage>
        <taxon>Bacteria</taxon>
        <taxon>Bacillati</taxon>
        <taxon>Bacillota</taxon>
        <taxon>Bacilli</taxon>
        <taxon>Lactobacillales</taxon>
        <taxon>Streptococcaceae</taxon>
        <taxon>Streptococcus</taxon>
    </lineage>
</organism>
<gene>
    <name evidence="1" type="primary">fusA</name>
    <name type="ordered locus">Sez_0268</name>
</gene>
<sequence length="692" mass="76588">MAREFSLAKTRNIGIMAHVDAGKTTTTERILYYTGKIHKIGETHEGASQMDWMEQEQERGITITSAATTAQWDGHRVNIIDTPGHVDFTIEVQRSLRVLDGAVTVLDSQSGVEPQTETVWRQATEYGVPRIVFANKMDKIGADFLYSVQTLHDRLQANAHPIQLPIGSEDDFRGIIDLIKMKAEIYTNDLGTDILEEDIPDEYLEQAQEYREKLIEAVAETDEDLMMKYLEGEEITNEELVAGIRKATINVEFFPVLCGSAFKNKGVQLMLDAVIAYLPSPLDIPAIKGVNPDTDAEEERPASDEEPFAALAFKIMTDPFVGRLTFFRVYSGVLNSGSYVMNTSKGKRERIGRILQMHANSRQEIETVYAGDIAAAVGLKDTTTGDSLTDEKAKIILESIEVPEPVIQLMVEPKSKADQDKMGIALQKLAEEDPTFRVETNVETGETVIAGMGELHLDVLVDRMRREFKVEANVGAPQVSYRETFRASTQARGFFKRQSGGKGQFGDVWIEFTPNEEGKGFEFENAIVGGVVPREFIPAVEKGLIESMANGVLAGYPMVDVKAKLYDGSYHDVDSSETAFKIAASLALKEAAKTAQPAILEPMMLVTITAPEDNLGDVMGHVTARRGRVDGMEAHGTSQIVRAYVPLAEMFGYATVLRSATQGRGTFMMVFDHYEDVPKSVQEEIIKKNKGE</sequence>
<keyword id="KW-0963">Cytoplasm</keyword>
<keyword id="KW-0251">Elongation factor</keyword>
<keyword id="KW-0342">GTP-binding</keyword>
<keyword id="KW-0547">Nucleotide-binding</keyword>
<keyword id="KW-0648">Protein biosynthesis</keyword>
<evidence type="ECO:0000255" key="1">
    <source>
        <dbReference type="HAMAP-Rule" id="MF_00054"/>
    </source>
</evidence>